<accession>Q9H9R9</accession>
<accession>B4DQS3</accession>
<accession>Q69YT2</accession>
<accession>Q9BW25</accession>
<feature type="chain" id="PRO_0000292438" description="Dysbindin domain-containing protein 1">
    <location>
        <begin position="1"/>
        <end position="158"/>
    </location>
</feature>
<feature type="region of interest" description="Disordered" evidence="1">
    <location>
        <begin position="1"/>
        <end position="50"/>
    </location>
</feature>
<feature type="region of interest" description="Disordered" evidence="1">
    <location>
        <begin position="93"/>
        <end position="158"/>
    </location>
</feature>
<feature type="compositionally biased region" description="Basic and acidic residues" evidence="1">
    <location>
        <begin position="125"/>
        <end position="141"/>
    </location>
</feature>
<feature type="modified residue" description="Phosphoserine" evidence="6">
    <location>
        <position position="95"/>
    </location>
</feature>
<feature type="modified residue" description="Phosphoserine" evidence="5">
    <location>
        <position position="119"/>
    </location>
</feature>
<feature type="splice variant" id="VSP_037541" description="In isoform 3." evidence="2">
    <original>MEPPEGAGTGE</original>
    <variation>MTQQWREVNEDREAVAQARSWQSLNLGDRDMGVSFIETALALSAARARRPLLTSHPPSRPFQPPKHTPSPPPAPRVNSRHPGRSVSLSLPSASQAPPVPLASPEGRPHTVGAPHASTWKRTRGRQRARPPK</variation>
    <location>
        <begin position="1"/>
        <end position="11"/>
    </location>
</feature>
<feature type="splice variant" id="VSP_026214" description="In isoform 2." evidence="3">
    <original>MEPPEGAGTG</original>
    <variation>MGETWKNICSTVRHGWWLRDHRMAGLPIPP</variation>
    <location>
        <begin position="1"/>
        <end position="10"/>
    </location>
</feature>
<feature type="sequence conflict" description="In Ref. 1; BAB14152." evidence="4" ref="1">
    <original>P</original>
    <variation>S</variation>
    <location>
        <position position="26"/>
    </location>
</feature>
<comment type="alternative products">
    <event type="alternative splicing"/>
    <isoform>
        <id>Q9H9R9-1</id>
        <name>1</name>
        <sequence type="displayed"/>
    </isoform>
    <isoform>
        <id>Q9H9R9-2</id>
        <name>2</name>
        <sequence type="described" ref="VSP_026214"/>
    </isoform>
    <isoform>
        <id>Q9H9R9-3</id>
        <name>3</name>
        <sequence type="described" ref="VSP_037541"/>
    </isoform>
</comment>
<comment type="similarity">
    <text evidence="4">Belongs to the dysbindin family.</text>
</comment>
<dbReference type="EMBL" id="AK022644">
    <property type="protein sequence ID" value="BAB14152.1"/>
    <property type="molecule type" value="mRNA"/>
</dbReference>
<dbReference type="EMBL" id="AK298932">
    <property type="protein sequence ID" value="BAG61035.1"/>
    <property type="molecule type" value="mRNA"/>
</dbReference>
<dbReference type="EMBL" id="AC092143">
    <property type="status" value="NOT_ANNOTATED_CDS"/>
    <property type="molecule type" value="Genomic_DNA"/>
</dbReference>
<dbReference type="EMBL" id="BC000700">
    <property type="protein sequence ID" value="AAH00700.2"/>
    <property type="molecule type" value="mRNA"/>
</dbReference>
<dbReference type="EMBL" id="AL713678">
    <property type="protein sequence ID" value="CAH10640.1"/>
    <property type="molecule type" value="mRNA"/>
</dbReference>
<dbReference type="CCDS" id="CCDS10991.2">
    <molecule id="Q9H9R9-2"/>
</dbReference>
<dbReference type="CCDS" id="CCDS42223.1">
    <molecule id="Q9H9R9-1"/>
</dbReference>
<dbReference type="RefSeq" id="NP_001036075.1">
    <molecule id="Q9H9R9-1"/>
    <property type="nucleotide sequence ID" value="NM_001042610.3"/>
</dbReference>
<dbReference type="RefSeq" id="NP_001275637.1">
    <property type="nucleotide sequence ID" value="NM_001288708.1"/>
</dbReference>
<dbReference type="RefSeq" id="NP_001275638.1">
    <property type="nucleotide sequence ID" value="NM_001288709.1"/>
</dbReference>
<dbReference type="RefSeq" id="NP_076948.2">
    <molecule id="Q9H9R9-2"/>
    <property type="nucleotide sequence ID" value="NM_024043.4"/>
</dbReference>
<dbReference type="BioGRID" id="122478">
    <property type="interactions" value="5"/>
</dbReference>
<dbReference type="FunCoup" id="Q9H9R9">
    <property type="interactions" value="105"/>
</dbReference>
<dbReference type="IntAct" id="Q9H9R9">
    <property type="interactions" value="3"/>
</dbReference>
<dbReference type="STRING" id="9606.ENSP00000457625"/>
<dbReference type="iPTMnet" id="Q9H9R9"/>
<dbReference type="PhosphoSitePlus" id="Q9H9R9"/>
<dbReference type="BioMuta" id="DBNDD1"/>
<dbReference type="DMDM" id="239938618"/>
<dbReference type="jPOST" id="Q9H9R9"/>
<dbReference type="MassIVE" id="Q9H9R9"/>
<dbReference type="PaxDb" id="9606-ENSP00000457625"/>
<dbReference type="PeptideAtlas" id="Q9H9R9"/>
<dbReference type="ProteomicsDB" id="81352">
    <molecule id="Q9H9R9-1"/>
</dbReference>
<dbReference type="ProteomicsDB" id="81353">
    <molecule id="Q9H9R9-2"/>
</dbReference>
<dbReference type="ProteomicsDB" id="81354">
    <molecule id="Q9H9R9-3"/>
</dbReference>
<dbReference type="Pumba" id="Q9H9R9"/>
<dbReference type="Antibodypedia" id="51595">
    <property type="antibodies" value="18 antibodies from 10 providers"/>
</dbReference>
<dbReference type="DNASU" id="79007"/>
<dbReference type="Ensembl" id="ENST00000002501.11">
    <molecule id="Q9H9R9-1"/>
    <property type="protein sequence ID" value="ENSP00000002501.6"/>
    <property type="gene ID" value="ENSG00000003249.15"/>
</dbReference>
<dbReference type="Ensembl" id="ENST00000304733.8">
    <molecule id="Q9H9R9-2"/>
    <property type="protein sequence ID" value="ENSP00000306407.3"/>
    <property type="gene ID" value="ENSG00000003249.15"/>
</dbReference>
<dbReference type="GeneID" id="79007"/>
<dbReference type="KEGG" id="hsa:79007"/>
<dbReference type="MANE-Select" id="ENST00000002501.11">
    <property type="protein sequence ID" value="ENSP00000002501.6"/>
    <property type="RefSeq nucleotide sequence ID" value="NM_001042610.3"/>
    <property type="RefSeq protein sequence ID" value="NP_001036075.1"/>
</dbReference>
<dbReference type="UCSC" id="uc002fqe.2">
    <molecule id="Q9H9R9-1"/>
    <property type="organism name" value="human"/>
</dbReference>
<dbReference type="AGR" id="HGNC:28455"/>
<dbReference type="CTD" id="79007"/>
<dbReference type="DisGeNET" id="79007"/>
<dbReference type="GeneCards" id="DBNDD1"/>
<dbReference type="HGNC" id="HGNC:28455">
    <property type="gene designation" value="DBNDD1"/>
</dbReference>
<dbReference type="HPA" id="ENSG00000003249">
    <property type="expression patterns" value="Tissue enhanced (brain, skeletal muscle)"/>
</dbReference>
<dbReference type="MIM" id="620388">
    <property type="type" value="gene"/>
</dbReference>
<dbReference type="neXtProt" id="NX_Q9H9R9"/>
<dbReference type="OpenTargets" id="ENSG00000003249"/>
<dbReference type="PharmGKB" id="PA144596443"/>
<dbReference type="VEuPathDB" id="HostDB:ENSG00000003249"/>
<dbReference type="eggNOG" id="ENOG502S0DA">
    <property type="taxonomic scope" value="Eukaryota"/>
</dbReference>
<dbReference type="GeneTree" id="ENSGT00390000018903"/>
<dbReference type="HOGENOM" id="CLU_087637_0_0_1"/>
<dbReference type="InParanoid" id="Q9H9R9"/>
<dbReference type="OMA" id="CHTPVAE"/>
<dbReference type="OrthoDB" id="9891754at2759"/>
<dbReference type="PAN-GO" id="Q9H9R9">
    <property type="GO annotations" value="1 GO annotation based on evolutionary models"/>
</dbReference>
<dbReference type="PhylomeDB" id="Q9H9R9"/>
<dbReference type="PathwayCommons" id="Q9H9R9"/>
<dbReference type="BioGRID-ORCS" id="79007">
    <property type="hits" value="21 hits in 1150 CRISPR screens"/>
</dbReference>
<dbReference type="ChiTaRS" id="DBNDD1">
    <property type="organism name" value="human"/>
</dbReference>
<dbReference type="GenomeRNAi" id="79007"/>
<dbReference type="Pharos" id="Q9H9R9">
    <property type="development level" value="Tdark"/>
</dbReference>
<dbReference type="PRO" id="PR:Q9H9R9"/>
<dbReference type="Proteomes" id="UP000005640">
    <property type="component" value="Chromosome 16"/>
</dbReference>
<dbReference type="RNAct" id="Q9H9R9">
    <property type="molecule type" value="protein"/>
</dbReference>
<dbReference type="Bgee" id="ENSG00000003249">
    <property type="expression patterns" value="Expressed in right frontal lobe and 116 other cell types or tissues"/>
</dbReference>
<dbReference type="ExpressionAtlas" id="Q9H9R9">
    <property type="expression patterns" value="baseline and differential"/>
</dbReference>
<dbReference type="GO" id="GO:0005737">
    <property type="term" value="C:cytoplasm"/>
    <property type="evidence" value="ECO:0007669"/>
    <property type="project" value="InterPro"/>
</dbReference>
<dbReference type="GO" id="GO:0009966">
    <property type="term" value="P:regulation of signal transduction"/>
    <property type="evidence" value="ECO:0000318"/>
    <property type="project" value="GO_Central"/>
</dbReference>
<dbReference type="InterPro" id="IPR007531">
    <property type="entry name" value="Dysbindin"/>
</dbReference>
<dbReference type="PANTHER" id="PTHR16294:SF4">
    <property type="entry name" value="DYSBINDIN DOMAIN-CONTAINING PROTEIN 1"/>
    <property type="match status" value="1"/>
</dbReference>
<dbReference type="PANTHER" id="PTHR16294">
    <property type="entry name" value="DYSTROBREVIN BINDING PROTEIN 1 DYSBINDIN"/>
    <property type="match status" value="1"/>
</dbReference>
<dbReference type="Pfam" id="PF04440">
    <property type="entry name" value="Dysbindin"/>
    <property type="match status" value="1"/>
</dbReference>
<protein>
    <recommendedName>
        <fullName>Dysbindin domain-containing protein 1</fullName>
    </recommendedName>
</protein>
<proteinExistence type="evidence at protein level"/>
<organism>
    <name type="scientific">Homo sapiens</name>
    <name type="common">Human</name>
    <dbReference type="NCBI Taxonomy" id="9606"/>
    <lineage>
        <taxon>Eukaryota</taxon>
        <taxon>Metazoa</taxon>
        <taxon>Chordata</taxon>
        <taxon>Craniata</taxon>
        <taxon>Vertebrata</taxon>
        <taxon>Euteleostomi</taxon>
        <taxon>Mammalia</taxon>
        <taxon>Eutheria</taxon>
        <taxon>Euarchontoglires</taxon>
        <taxon>Primates</taxon>
        <taxon>Haplorrhini</taxon>
        <taxon>Catarrhini</taxon>
        <taxon>Hominidae</taxon>
        <taxon>Homo</taxon>
    </lineage>
</organism>
<reference key="1">
    <citation type="journal article" date="2004" name="Nat. Genet.">
        <title>Complete sequencing and characterization of 21,243 full-length human cDNAs.</title>
        <authorList>
            <person name="Ota T."/>
            <person name="Suzuki Y."/>
            <person name="Nishikawa T."/>
            <person name="Otsuki T."/>
            <person name="Sugiyama T."/>
            <person name="Irie R."/>
            <person name="Wakamatsu A."/>
            <person name="Hayashi K."/>
            <person name="Sato H."/>
            <person name="Nagai K."/>
            <person name="Kimura K."/>
            <person name="Makita H."/>
            <person name="Sekine M."/>
            <person name="Obayashi M."/>
            <person name="Nishi T."/>
            <person name="Shibahara T."/>
            <person name="Tanaka T."/>
            <person name="Ishii S."/>
            <person name="Yamamoto J."/>
            <person name="Saito K."/>
            <person name="Kawai Y."/>
            <person name="Isono Y."/>
            <person name="Nakamura Y."/>
            <person name="Nagahari K."/>
            <person name="Murakami K."/>
            <person name="Yasuda T."/>
            <person name="Iwayanagi T."/>
            <person name="Wagatsuma M."/>
            <person name="Shiratori A."/>
            <person name="Sudo H."/>
            <person name="Hosoiri T."/>
            <person name="Kaku Y."/>
            <person name="Kodaira H."/>
            <person name="Kondo H."/>
            <person name="Sugawara M."/>
            <person name="Takahashi M."/>
            <person name="Kanda K."/>
            <person name="Yokoi T."/>
            <person name="Furuya T."/>
            <person name="Kikkawa E."/>
            <person name="Omura Y."/>
            <person name="Abe K."/>
            <person name="Kamihara K."/>
            <person name="Katsuta N."/>
            <person name="Sato K."/>
            <person name="Tanikawa M."/>
            <person name="Yamazaki M."/>
            <person name="Ninomiya K."/>
            <person name="Ishibashi T."/>
            <person name="Yamashita H."/>
            <person name="Murakawa K."/>
            <person name="Fujimori K."/>
            <person name="Tanai H."/>
            <person name="Kimata M."/>
            <person name="Watanabe M."/>
            <person name="Hiraoka S."/>
            <person name="Chiba Y."/>
            <person name="Ishida S."/>
            <person name="Ono Y."/>
            <person name="Takiguchi S."/>
            <person name="Watanabe S."/>
            <person name="Yosida M."/>
            <person name="Hotuta T."/>
            <person name="Kusano J."/>
            <person name="Kanehori K."/>
            <person name="Takahashi-Fujii A."/>
            <person name="Hara H."/>
            <person name="Tanase T.-O."/>
            <person name="Nomura Y."/>
            <person name="Togiya S."/>
            <person name="Komai F."/>
            <person name="Hara R."/>
            <person name="Takeuchi K."/>
            <person name="Arita M."/>
            <person name="Imose N."/>
            <person name="Musashino K."/>
            <person name="Yuuki H."/>
            <person name="Oshima A."/>
            <person name="Sasaki N."/>
            <person name="Aotsuka S."/>
            <person name="Yoshikawa Y."/>
            <person name="Matsunawa H."/>
            <person name="Ichihara T."/>
            <person name="Shiohata N."/>
            <person name="Sano S."/>
            <person name="Moriya S."/>
            <person name="Momiyama H."/>
            <person name="Satoh N."/>
            <person name="Takami S."/>
            <person name="Terashima Y."/>
            <person name="Suzuki O."/>
            <person name="Nakagawa S."/>
            <person name="Senoh A."/>
            <person name="Mizoguchi H."/>
            <person name="Goto Y."/>
            <person name="Shimizu F."/>
            <person name="Wakebe H."/>
            <person name="Hishigaki H."/>
            <person name="Watanabe T."/>
            <person name="Sugiyama A."/>
            <person name="Takemoto M."/>
            <person name="Kawakami B."/>
            <person name="Yamazaki M."/>
            <person name="Watanabe K."/>
            <person name="Kumagai A."/>
            <person name="Itakura S."/>
            <person name="Fukuzumi Y."/>
            <person name="Fujimori Y."/>
            <person name="Komiyama M."/>
            <person name="Tashiro H."/>
            <person name="Tanigami A."/>
            <person name="Fujiwara T."/>
            <person name="Ono T."/>
            <person name="Yamada K."/>
            <person name="Fujii Y."/>
            <person name="Ozaki K."/>
            <person name="Hirao M."/>
            <person name="Ohmori Y."/>
            <person name="Kawabata A."/>
            <person name="Hikiji T."/>
            <person name="Kobatake N."/>
            <person name="Inagaki H."/>
            <person name="Ikema Y."/>
            <person name="Okamoto S."/>
            <person name="Okitani R."/>
            <person name="Kawakami T."/>
            <person name="Noguchi S."/>
            <person name="Itoh T."/>
            <person name="Shigeta K."/>
            <person name="Senba T."/>
            <person name="Matsumura K."/>
            <person name="Nakajima Y."/>
            <person name="Mizuno T."/>
            <person name="Morinaga M."/>
            <person name="Sasaki M."/>
            <person name="Togashi T."/>
            <person name="Oyama M."/>
            <person name="Hata H."/>
            <person name="Watanabe M."/>
            <person name="Komatsu T."/>
            <person name="Mizushima-Sugano J."/>
            <person name="Satoh T."/>
            <person name="Shirai Y."/>
            <person name="Takahashi Y."/>
            <person name="Nakagawa K."/>
            <person name="Okumura K."/>
            <person name="Nagase T."/>
            <person name="Nomura N."/>
            <person name="Kikuchi H."/>
            <person name="Masuho Y."/>
            <person name="Yamashita R."/>
            <person name="Nakai K."/>
            <person name="Yada T."/>
            <person name="Nakamura Y."/>
            <person name="Ohara O."/>
            <person name="Isogai T."/>
            <person name="Sugano S."/>
        </authorList>
    </citation>
    <scope>NUCLEOTIDE SEQUENCE [LARGE SCALE MRNA] (ISOFORMS 1 AND 3)</scope>
</reference>
<reference key="2">
    <citation type="journal article" date="2004" name="Nature">
        <title>The sequence and analysis of duplication-rich human chromosome 16.</title>
        <authorList>
            <person name="Martin J."/>
            <person name="Han C."/>
            <person name="Gordon L.A."/>
            <person name="Terry A."/>
            <person name="Prabhakar S."/>
            <person name="She X."/>
            <person name="Xie G."/>
            <person name="Hellsten U."/>
            <person name="Chan Y.M."/>
            <person name="Altherr M."/>
            <person name="Couronne O."/>
            <person name="Aerts A."/>
            <person name="Bajorek E."/>
            <person name="Black S."/>
            <person name="Blumer H."/>
            <person name="Branscomb E."/>
            <person name="Brown N.C."/>
            <person name="Bruno W.J."/>
            <person name="Buckingham J.M."/>
            <person name="Callen D.F."/>
            <person name="Campbell C.S."/>
            <person name="Campbell M.L."/>
            <person name="Campbell E.W."/>
            <person name="Caoile C."/>
            <person name="Challacombe J.F."/>
            <person name="Chasteen L.A."/>
            <person name="Chertkov O."/>
            <person name="Chi H.C."/>
            <person name="Christensen M."/>
            <person name="Clark L.M."/>
            <person name="Cohn J.D."/>
            <person name="Denys M."/>
            <person name="Detter J.C."/>
            <person name="Dickson M."/>
            <person name="Dimitrijevic-Bussod M."/>
            <person name="Escobar J."/>
            <person name="Fawcett J.J."/>
            <person name="Flowers D."/>
            <person name="Fotopulos D."/>
            <person name="Glavina T."/>
            <person name="Gomez M."/>
            <person name="Gonzales E."/>
            <person name="Goodstein D."/>
            <person name="Goodwin L.A."/>
            <person name="Grady D.L."/>
            <person name="Grigoriev I."/>
            <person name="Groza M."/>
            <person name="Hammon N."/>
            <person name="Hawkins T."/>
            <person name="Haydu L."/>
            <person name="Hildebrand C.E."/>
            <person name="Huang W."/>
            <person name="Israni S."/>
            <person name="Jett J."/>
            <person name="Jewett P.B."/>
            <person name="Kadner K."/>
            <person name="Kimball H."/>
            <person name="Kobayashi A."/>
            <person name="Krawczyk M.-C."/>
            <person name="Leyba T."/>
            <person name="Longmire J.L."/>
            <person name="Lopez F."/>
            <person name="Lou Y."/>
            <person name="Lowry S."/>
            <person name="Ludeman T."/>
            <person name="Manohar C.F."/>
            <person name="Mark G.A."/>
            <person name="McMurray K.L."/>
            <person name="Meincke L.J."/>
            <person name="Morgan J."/>
            <person name="Moyzis R.K."/>
            <person name="Mundt M.O."/>
            <person name="Munk A.C."/>
            <person name="Nandkeshwar R.D."/>
            <person name="Pitluck S."/>
            <person name="Pollard M."/>
            <person name="Predki P."/>
            <person name="Parson-Quintana B."/>
            <person name="Ramirez L."/>
            <person name="Rash S."/>
            <person name="Retterer J."/>
            <person name="Ricke D.O."/>
            <person name="Robinson D.L."/>
            <person name="Rodriguez A."/>
            <person name="Salamov A."/>
            <person name="Saunders E.H."/>
            <person name="Scott D."/>
            <person name="Shough T."/>
            <person name="Stallings R.L."/>
            <person name="Stalvey M."/>
            <person name="Sutherland R.D."/>
            <person name="Tapia R."/>
            <person name="Tesmer J.G."/>
            <person name="Thayer N."/>
            <person name="Thompson L.S."/>
            <person name="Tice H."/>
            <person name="Torney D.C."/>
            <person name="Tran-Gyamfi M."/>
            <person name="Tsai M."/>
            <person name="Ulanovsky L.E."/>
            <person name="Ustaszewska A."/>
            <person name="Vo N."/>
            <person name="White P.S."/>
            <person name="Williams A.L."/>
            <person name="Wills P.L."/>
            <person name="Wu J.-R."/>
            <person name="Wu K."/>
            <person name="Yang J."/>
            <person name="DeJong P."/>
            <person name="Bruce D."/>
            <person name="Doggett N.A."/>
            <person name="Deaven L."/>
            <person name="Schmutz J."/>
            <person name="Grimwood J."/>
            <person name="Richardson P."/>
            <person name="Rokhsar D.S."/>
            <person name="Eichler E.E."/>
            <person name="Gilna P."/>
            <person name="Lucas S.M."/>
            <person name="Myers R.M."/>
            <person name="Rubin E.M."/>
            <person name="Pennacchio L.A."/>
        </authorList>
    </citation>
    <scope>NUCLEOTIDE SEQUENCE [LARGE SCALE GENOMIC DNA]</scope>
</reference>
<reference key="3">
    <citation type="journal article" date="2004" name="Genome Res.">
        <title>The status, quality, and expansion of the NIH full-length cDNA project: the Mammalian Gene Collection (MGC).</title>
        <authorList>
            <consortium name="The MGC Project Team"/>
        </authorList>
    </citation>
    <scope>NUCLEOTIDE SEQUENCE [LARGE SCALE MRNA] (ISOFORM 2)</scope>
    <source>
        <tissue>Eye</tissue>
    </source>
</reference>
<reference key="4">
    <citation type="journal article" date="2007" name="BMC Genomics">
        <title>The full-ORF clone resource of the German cDNA consortium.</title>
        <authorList>
            <person name="Bechtel S."/>
            <person name="Rosenfelder H."/>
            <person name="Duda A."/>
            <person name="Schmidt C.P."/>
            <person name="Ernst U."/>
            <person name="Wellenreuther R."/>
            <person name="Mehrle A."/>
            <person name="Schuster C."/>
            <person name="Bahr A."/>
            <person name="Bloecker H."/>
            <person name="Heubner D."/>
            <person name="Hoerlein A."/>
            <person name="Michel G."/>
            <person name="Wedler H."/>
            <person name="Koehrer K."/>
            <person name="Ottenwaelder B."/>
            <person name="Poustka A."/>
            <person name="Wiemann S."/>
            <person name="Schupp I."/>
        </authorList>
    </citation>
    <scope>NUCLEOTIDE SEQUENCE [LARGE SCALE MRNA] OF 122-158</scope>
    <source>
        <tissue>Amygdala</tissue>
    </source>
</reference>
<reference key="5">
    <citation type="journal article" date="2013" name="J. Proteome Res.">
        <title>Toward a comprehensive characterization of a human cancer cell phosphoproteome.</title>
        <authorList>
            <person name="Zhou H."/>
            <person name="Di Palma S."/>
            <person name="Preisinger C."/>
            <person name="Peng M."/>
            <person name="Polat A.N."/>
            <person name="Heck A.J."/>
            <person name="Mohammed S."/>
        </authorList>
    </citation>
    <scope>PHOSPHORYLATION [LARGE SCALE ANALYSIS] AT SER-119</scope>
    <scope>IDENTIFICATION BY MASS SPECTROMETRY [LARGE SCALE ANALYSIS]</scope>
    <source>
        <tissue>Erythroleukemia</tissue>
    </source>
</reference>
<reference key="6">
    <citation type="journal article" date="2014" name="J. Proteomics">
        <title>An enzyme assisted RP-RPLC approach for in-depth analysis of human liver phosphoproteome.</title>
        <authorList>
            <person name="Bian Y."/>
            <person name="Song C."/>
            <person name="Cheng K."/>
            <person name="Dong M."/>
            <person name="Wang F."/>
            <person name="Huang J."/>
            <person name="Sun D."/>
            <person name="Wang L."/>
            <person name="Ye M."/>
            <person name="Zou H."/>
        </authorList>
    </citation>
    <scope>PHOSPHORYLATION [LARGE SCALE ANALYSIS] AT SER-95</scope>
    <scope>IDENTIFICATION BY MASS SPECTROMETRY [LARGE SCALE ANALYSIS]</scope>
    <source>
        <tissue>Liver</tissue>
    </source>
</reference>
<sequence>MEPPEGAGTGEIVKEAEVPQAALGVPAQGTGDNGHTPVEEEVGGIPVPAPGLLQVTERRQPLSSVSSLEVHFDLLDLTELTDMSDQELAEVFADSDDENLNTESPAGLHPLPRAGYLRSPSWTRTRAEQSHEKQPLGDPERQATVLDTFLTVERPQED</sequence>
<gene>
    <name type="primary">DBNDD1</name>
</gene>
<keyword id="KW-0025">Alternative splicing</keyword>
<keyword id="KW-0597">Phosphoprotein</keyword>
<keyword id="KW-1267">Proteomics identification</keyword>
<keyword id="KW-1185">Reference proteome</keyword>
<evidence type="ECO:0000256" key="1">
    <source>
        <dbReference type="SAM" id="MobiDB-lite"/>
    </source>
</evidence>
<evidence type="ECO:0000303" key="2">
    <source>
    </source>
</evidence>
<evidence type="ECO:0000303" key="3">
    <source>
    </source>
</evidence>
<evidence type="ECO:0000305" key="4"/>
<evidence type="ECO:0007744" key="5">
    <source>
    </source>
</evidence>
<evidence type="ECO:0007744" key="6">
    <source>
    </source>
</evidence>
<name>DBND1_HUMAN</name>